<sequence length="61" mass="6840">MKILLAALTSSFMLVGCTPRIEVAAPKEPITINMNVKIEHEIIIKADKDVEELLETRSDLF</sequence>
<keyword id="KW-0998">Cell outer membrane</keyword>
<keyword id="KW-0449">Lipoprotein</keyword>
<keyword id="KW-0472">Membrane</keyword>
<keyword id="KW-0564">Palmitate</keyword>
<keyword id="KW-1185">Reference proteome</keyword>
<keyword id="KW-0732">Signal</keyword>
<accession>P64450</accession>
<accession>P76075</accession>
<evidence type="ECO:0000250" key="1">
    <source>
        <dbReference type="UniProtKB" id="P64448"/>
    </source>
</evidence>
<evidence type="ECO:0000255" key="2">
    <source>
        <dbReference type="PROSITE-ProRule" id="PRU00303"/>
    </source>
</evidence>
<evidence type="ECO:0000305" key="3"/>
<gene>
    <name type="primary">ynbE</name>
    <name type="ordered locus">SF1816</name>
    <name type="ordered locus">S1457</name>
</gene>
<feature type="signal peptide" evidence="2">
    <location>
        <begin position="1"/>
        <end position="16"/>
    </location>
</feature>
<feature type="chain" id="PRO_0000168926" description="Outer membrane lipoprotein YnbE" evidence="2">
    <location>
        <begin position="17"/>
        <end position="61"/>
    </location>
</feature>
<feature type="lipid moiety-binding region" description="N-palmitoyl cysteine" evidence="2">
    <location>
        <position position="17"/>
    </location>
</feature>
<feature type="lipid moiety-binding region" description="S-diacylglycerol cysteine" evidence="2">
    <location>
        <position position="17"/>
    </location>
</feature>
<dbReference type="EMBL" id="AE005674">
    <property type="protein sequence ID" value="AAN43382.1"/>
    <property type="molecule type" value="Genomic_DNA"/>
</dbReference>
<dbReference type="EMBL" id="AE014073">
    <property type="protein sequence ID" value="AAP16851.1"/>
    <property type="molecule type" value="Genomic_DNA"/>
</dbReference>
<dbReference type="RefSeq" id="NP_707675.1">
    <property type="nucleotide sequence ID" value="NC_004337.2"/>
</dbReference>
<dbReference type="RefSeq" id="WP_000698145.1">
    <property type="nucleotide sequence ID" value="NZ_WPGW01000199.1"/>
</dbReference>
<dbReference type="STRING" id="198214.SF1816"/>
<dbReference type="PaxDb" id="198214-SF1816"/>
<dbReference type="GeneID" id="1024972"/>
<dbReference type="KEGG" id="sfl:SF1816"/>
<dbReference type="KEGG" id="sfx:S1457"/>
<dbReference type="PATRIC" id="fig|198214.7.peg.2155"/>
<dbReference type="HOGENOM" id="CLU_183514_0_0_6"/>
<dbReference type="Proteomes" id="UP000001006">
    <property type="component" value="Chromosome"/>
</dbReference>
<dbReference type="Proteomes" id="UP000002673">
    <property type="component" value="Chromosome"/>
</dbReference>
<dbReference type="InterPro" id="IPR025985">
    <property type="entry name" value="YnbE-like"/>
</dbReference>
<dbReference type="Pfam" id="PF13617">
    <property type="entry name" value="Lipoprotein_19"/>
    <property type="match status" value="1"/>
</dbReference>
<dbReference type="PROSITE" id="PS51257">
    <property type="entry name" value="PROKAR_LIPOPROTEIN"/>
    <property type="match status" value="1"/>
</dbReference>
<protein>
    <recommendedName>
        <fullName evidence="1">Outer membrane lipoprotein YnbE</fullName>
    </recommendedName>
    <alternativeName>
        <fullName evidence="1">Probable phospholipid transport lipoprotein YnbE</fullName>
    </alternativeName>
</protein>
<name>YNBE_SHIFL</name>
<proteinExistence type="inferred from homology"/>
<organism>
    <name type="scientific">Shigella flexneri</name>
    <dbReference type="NCBI Taxonomy" id="623"/>
    <lineage>
        <taxon>Bacteria</taxon>
        <taxon>Pseudomonadati</taxon>
        <taxon>Pseudomonadota</taxon>
        <taxon>Gammaproteobacteria</taxon>
        <taxon>Enterobacterales</taxon>
        <taxon>Enterobacteriaceae</taxon>
        <taxon>Shigella</taxon>
    </lineage>
</organism>
<comment type="function">
    <text evidence="1">Involved in outer membrane lipid homeostasis. Interacts with the inner membrane protein YdbH to form a functional protein bridge connecting the inner and outer membranes of the cell. Is required for YdbH's function and may facilitate phospholipid transport through the periplasm.</text>
</comment>
<comment type="subunit">
    <text evidence="1">Interacts with the C-terminal region of the probable phospholipid transport protein YdbH.</text>
</comment>
<comment type="subcellular location">
    <subcellularLocation>
        <location evidence="1">Cell outer membrane</location>
        <topology evidence="2">Lipid-anchor</topology>
    </subcellularLocation>
</comment>
<comment type="similarity">
    <text evidence="3">Belongs to the lipoprotein YnbE family.</text>
</comment>
<reference key="1">
    <citation type="journal article" date="2002" name="Nucleic Acids Res.">
        <title>Genome sequence of Shigella flexneri 2a: insights into pathogenicity through comparison with genomes of Escherichia coli K12 and O157.</title>
        <authorList>
            <person name="Jin Q."/>
            <person name="Yuan Z."/>
            <person name="Xu J."/>
            <person name="Wang Y."/>
            <person name="Shen Y."/>
            <person name="Lu W."/>
            <person name="Wang J."/>
            <person name="Liu H."/>
            <person name="Yang J."/>
            <person name="Yang F."/>
            <person name="Zhang X."/>
            <person name="Zhang J."/>
            <person name="Yang G."/>
            <person name="Wu H."/>
            <person name="Qu D."/>
            <person name="Dong J."/>
            <person name="Sun L."/>
            <person name="Xue Y."/>
            <person name="Zhao A."/>
            <person name="Gao Y."/>
            <person name="Zhu J."/>
            <person name="Kan B."/>
            <person name="Ding K."/>
            <person name="Chen S."/>
            <person name="Cheng H."/>
            <person name="Yao Z."/>
            <person name="He B."/>
            <person name="Chen R."/>
            <person name="Ma D."/>
            <person name="Qiang B."/>
            <person name="Wen Y."/>
            <person name="Hou Y."/>
            <person name="Yu J."/>
        </authorList>
    </citation>
    <scope>NUCLEOTIDE SEQUENCE [LARGE SCALE GENOMIC DNA]</scope>
    <source>
        <strain>301 / Serotype 2a</strain>
    </source>
</reference>
<reference key="2">
    <citation type="journal article" date="2003" name="Infect. Immun.">
        <title>Complete genome sequence and comparative genomics of Shigella flexneri serotype 2a strain 2457T.</title>
        <authorList>
            <person name="Wei J."/>
            <person name="Goldberg M.B."/>
            <person name="Burland V."/>
            <person name="Venkatesan M.M."/>
            <person name="Deng W."/>
            <person name="Fournier G."/>
            <person name="Mayhew G.F."/>
            <person name="Plunkett G. III"/>
            <person name="Rose D.J."/>
            <person name="Darling A."/>
            <person name="Mau B."/>
            <person name="Perna N.T."/>
            <person name="Payne S.M."/>
            <person name="Runyen-Janecky L.J."/>
            <person name="Zhou S."/>
            <person name="Schwartz D.C."/>
            <person name="Blattner F.R."/>
        </authorList>
    </citation>
    <scope>NUCLEOTIDE SEQUENCE [LARGE SCALE GENOMIC DNA]</scope>
    <source>
        <strain>ATCC 700930 / 2457T / Serotype 2a</strain>
    </source>
</reference>